<sequence length="242" mass="27342">MSKSRLTVFSFVRRFLLRLMVVLAVFWGGGIALFSVAPVPFSAVMVERQVSAWLHGNFRYVAHSDWVSMDQISPWMGLAVIAAEDQKFPEHWGFDVASIEKALAHNERNENRIRGASTISQQTAKNLFLWDGRSWVRKGLEAGLTLGIETVWSKKRILTVYLNIAEFGDGVFGVEAAAQRYFHKPASKLTRSEAALLAAVLPNPLRFKVSSPSGYVRSRQAWILRQMYQLGGEPFMQQHQLD</sequence>
<feature type="chain" id="PRO_0000083125" description="Biosynthetic peptidoglycan transglycosylase">
    <location>
        <begin position="1"/>
        <end position="242"/>
    </location>
</feature>
<feature type="transmembrane region" description="Helical" evidence="1">
    <location>
        <begin position="19"/>
        <end position="39"/>
    </location>
</feature>
<accession>P46022</accession>
<accession>Q2M904</accession>
<organism>
    <name type="scientific">Escherichia coli (strain K12)</name>
    <dbReference type="NCBI Taxonomy" id="83333"/>
    <lineage>
        <taxon>Bacteria</taxon>
        <taxon>Pseudomonadati</taxon>
        <taxon>Pseudomonadota</taxon>
        <taxon>Gammaproteobacteria</taxon>
        <taxon>Enterobacterales</taxon>
        <taxon>Enterobacteriaceae</taxon>
        <taxon>Escherichia</taxon>
    </lineage>
</organism>
<name>MTGA_ECOLI</name>
<proteinExistence type="evidence at protein level"/>
<keyword id="KW-0997">Cell inner membrane</keyword>
<keyword id="KW-1003">Cell membrane</keyword>
<keyword id="KW-0133">Cell shape</keyword>
<keyword id="KW-0961">Cell wall biogenesis/degradation</keyword>
<keyword id="KW-0328">Glycosyltransferase</keyword>
<keyword id="KW-0472">Membrane</keyword>
<keyword id="KW-0573">Peptidoglycan synthesis</keyword>
<keyword id="KW-1185">Reference proteome</keyword>
<keyword id="KW-0808">Transferase</keyword>
<keyword id="KW-0812">Transmembrane</keyword>
<keyword id="KW-1133">Transmembrane helix</keyword>
<dbReference type="EC" id="2.4.99.28" evidence="1 4"/>
<dbReference type="EMBL" id="U18997">
    <property type="protein sequence ID" value="AAA58010.1"/>
    <property type="molecule type" value="Genomic_DNA"/>
</dbReference>
<dbReference type="EMBL" id="U00096">
    <property type="protein sequence ID" value="AAC76240.1"/>
    <property type="molecule type" value="Genomic_DNA"/>
</dbReference>
<dbReference type="EMBL" id="AP009048">
    <property type="protein sequence ID" value="BAE77252.1"/>
    <property type="molecule type" value="Genomic_DNA"/>
</dbReference>
<dbReference type="EMBL" id="D13188">
    <property type="status" value="NOT_ANNOTATED_CDS"/>
    <property type="molecule type" value="Genomic_DNA"/>
</dbReference>
<dbReference type="PIR" id="B65112">
    <property type="entry name" value="B65112"/>
</dbReference>
<dbReference type="RefSeq" id="NP_417675.1">
    <property type="nucleotide sequence ID" value="NC_000913.3"/>
</dbReference>
<dbReference type="RefSeq" id="WP_000047091.1">
    <property type="nucleotide sequence ID" value="NZ_STEB01000012.1"/>
</dbReference>
<dbReference type="SMR" id="P46022"/>
<dbReference type="BioGRID" id="4259286">
    <property type="interactions" value="275"/>
</dbReference>
<dbReference type="BioGRID" id="852041">
    <property type="interactions" value="1"/>
</dbReference>
<dbReference type="DIP" id="DIP-10266N"/>
<dbReference type="FunCoup" id="P46022">
    <property type="interactions" value="275"/>
</dbReference>
<dbReference type="IntAct" id="P46022">
    <property type="interactions" value="6"/>
</dbReference>
<dbReference type="STRING" id="511145.b3208"/>
<dbReference type="CAZy" id="GT51">
    <property type="family name" value="Glycosyltransferase Family 51"/>
</dbReference>
<dbReference type="PaxDb" id="511145-b3208"/>
<dbReference type="EnsemblBacteria" id="AAC76240">
    <property type="protein sequence ID" value="AAC76240"/>
    <property type="gene ID" value="b3208"/>
</dbReference>
<dbReference type="GeneID" id="75206064"/>
<dbReference type="GeneID" id="947728"/>
<dbReference type="KEGG" id="ecj:JW3175"/>
<dbReference type="KEGG" id="eco:b3208"/>
<dbReference type="KEGG" id="ecoc:C3026_17455"/>
<dbReference type="PATRIC" id="fig|1411691.4.peg.3523"/>
<dbReference type="EchoBASE" id="EB2659"/>
<dbReference type="eggNOG" id="COG0744">
    <property type="taxonomic scope" value="Bacteria"/>
</dbReference>
<dbReference type="HOGENOM" id="CLU_006354_1_1_6"/>
<dbReference type="InParanoid" id="P46022"/>
<dbReference type="OMA" id="PAPKCFD"/>
<dbReference type="OrthoDB" id="9766909at2"/>
<dbReference type="PhylomeDB" id="P46022"/>
<dbReference type="BioCyc" id="EcoCyc:G7668-MONOMER"/>
<dbReference type="BioCyc" id="MetaCyc:G7668-MONOMER"/>
<dbReference type="UniPathway" id="UPA00219"/>
<dbReference type="PRO" id="PR:P46022"/>
<dbReference type="Proteomes" id="UP000000625">
    <property type="component" value="Chromosome"/>
</dbReference>
<dbReference type="GO" id="GO:0009274">
    <property type="term" value="C:peptidoglycan-based cell wall"/>
    <property type="evidence" value="ECO:0007669"/>
    <property type="project" value="InterPro"/>
</dbReference>
<dbReference type="GO" id="GO:0005886">
    <property type="term" value="C:plasma membrane"/>
    <property type="evidence" value="ECO:0000314"/>
    <property type="project" value="EcoCyc"/>
</dbReference>
<dbReference type="GO" id="GO:0016763">
    <property type="term" value="F:pentosyltransferase activity"/>
    <property type="evidence" value="ECO:0007669"/>
    <property type="project" value="InterPro"/>
</dbReference>
<dbReference type="GO" id="GO:0008955">
    <property type="term" value="F:peptidoglycan glycosyltransferase activity"/>
    <property type="evidence" value="ECO:0000314"/>
    <property type="project" value="EcoCyc"/>
</dbReference>
<dbReference type="GO" id="GO:0071555">
    <property type="term" value="P:cell wall organization"/>
    <property type="evidence" value="ECO:0007669"/>
    <property type="project" value="UniProtKB-KW"/>
</dbReference>
<dbReference type="GO" id="GO:0043164">
    <property type="term" value="P:Gram-negative-bacterium-type cell wall biogenesis"/>
    <property type="evidence" value="ECO:0000314"/>
    <property type="project" value="EcoCyc"/>
</dbReference>
<dbReference type="GO" id="GO:0009252">
    <property type="term" value="P:peptidoglycan biosynthetic process"/>
    <property type="evidence" value="ECO:0000314"/>
    <property type="project" value="EcoCyc"/>
</dbReference>
<dbReference type="GO" id="GO:0008360">
    <property type="term" value="P:regulation of cell shape"/>
    <property type="evidence" value="ECO:0007669"/>
    <property type="project" value="UniProtKB-KW"/>
</dbReference>
<dbReference type="FunFam" id="1.10.3810.10:FF:000004">
    <property type="entry name" value="Biosynthetic peptidoglycan transglycosylase"/>
    <property type="match status" value="1"/>
</dbReference>
<dbReference type="Gene3D" id="1.10.3810.10">
    <property type="entry name" value="Biosynthetic peptidoglycan transglycosylase-like"/>
    <property type="match status" value="1"/>
</dbReference>
<dbReference type="HAMAP" id="MF_00766">
    <property type="entry name" value="PGT_MtgA"/>
    <property type="match status" value="1"/>
</dbReference>
<dbReference type="InterPro" id="IPR001264">
    <property type="entry name" value="Glyco_trans_51"/>
</dbReference>
<dbReference type="InterPro" id="IPR023346">
    <property type="entry name" value="Lysozyme-like_dom_sf"/>
</dbReference>
<dbReference type="InterPro" id="IPR036950">
    <property type="entry name" value="PBP_transglycosylase"/>
</dbReference>
<dbReference type="InterPro" id="IPR011812">
    <property type="entry name" value="Pep_trsgly"/>
</dbReference>
<dbReference type="NCBIfam" id="TIGR02070">
    <property type="entry name" value="mono_pep_trsgly"/>
    <property type="match status" value="1"/>
</dbReference>
<dbReference type="PANTHER" id="PTHR30400:SF0">
    <property type="entry name" value="BIOSYNTHETIC PEPTIDOGLYCAN TRANSGLYCOSYLASE"/>
    <property type="match status" value="1"/>
</dbReference>
<dbReference type="PANTHER" id="PTHR30400">
    <property type="entry name" value="MONOFUNCTIONAL BIOSYNTHETIC PEPTIDOGLYCAN TRANSGLYCOSYLASE"/>
    <property type="match status" value="1"/>
</dbReference>
<dbReference type="Pfam" id="PF00912">
    <property type="entry name" value="Transgly"/>
    <property type="match status" value="1"/>
</dbReference>
<dbReference type="SUPFAM" id="SSF53955">
    <property type="entry name" value="Lysozyme-like"/>
    <property type="match status" value="1"/>
</dbReference>
<protein>
    <recommendedName>
        <fullName evidence="1 8">Biosynthetic peptidoglycan transglycosylase</fullName>
        <ecNumber evidence="1 4">2.4.99.28</ecNumber>
    </recommendedName>
    <alternativeName>
        <fullName evidence="1 6">Glycan polymerase</fullName>
    </alternativeName>
    <alternativeName>
        <fullName evidence="8">Monofunctional biosynthetic peptidoglycan transglycosylase</fullName>
    </alternativeName>
    <alternativeName>
        <fullName evidence="7">Monofunctional glycosyltransferase</fullName>
        <shortName evidence="7">Monofunctional GTase</shortName>
    </alternativeName>
    <alternativeName>
        <fullName evidence="1 8">Peptidoglycan glycosyltransferase MtgA</fullName>
        <shortName evidence="1 8">PGT</shortName>
    </alternativeName>
</protein>
<gene>
    <name evidence="1 5" type="primary">mtgA</name>
    <name evidence="7" type="synonym">mgt</name>
    <name type="synonym">yrbM</name>
    <name type="ordered locus">b3208</name>
    <name type="ordered locus">JW3175</name>
</gene>
<comment type="function">
    <text evidence="2 3 4">Peptidoglycan polymerase that catalyzes glycan chain elongation from lipid-linked precursors (PubMed:18165305, PubMed:6368264, PubMed:8772200). May play a role in peptidoglycan assembly during cell division in collaboration with other cell division proteins (PubMed:18165305).</text>
</comment>
<comment type="catalytic activity">
    <reaction evidence="1 2 4">
        <text>[GlcNAc-(1-&gt;4)-Mur2Ac(oyl-L-Ala-gamma-D-Glu-L-Lys-D-Ala-D-Ala)](n)-di-trans,octa-cis-undecaprenyl diphosphate + beta-D-GlcNAc-(1-&gt;4)-Mur2Ac(oyl-L-Ala-gamma-D-Glu-L-Lys-D-Ala-D-Ala)-di-trans,octa-cis-undecaprenyl diphosphate = [GlcNAc-(1-&gt;4)-Mur2Ac(oyl-L-Ala-gamma-D-Glu-L-Lys-D-Ala-D-Ala)](n+1)-di-trans,octa-cis-undecaprenyl diphosphate + di-trans,octa-cis-undecaprenyl diphosphate + H(+)</text>
        <dbReference type="Rhea" id="RHEA:23708"/>
        <dbReference type="Rhea" id="RHEA-COMP:9602"/>
        <dbReference type="Rhea" id="RHEA-COMP:9603"/>
        <dbReference type="ChEBI" id="CHEBI:15378"/>
        <dbReference type="ChEBI" id="CHEBI:58405"/>
        <dbReference type="ChEBI" id="CHEBI:60033"/>
        <dbReference type="ChEBI" id="CHEBI:78435"/>
        <dbReference type="EC" id="2.4.99.28"/>
    </reaction>
</comment>
<comment type="activity regulation">
    <text evidence="3 4">Inhibited by EDTA (PubMed:6368264). Stimulated by Ca(2+), Mn(2+) and Co(2+) (PubMed:6368264). Not inhibited by flavomycin (PubMed:8772200).</text>
</comment>
<comment type="biophysicochemical properties">
    <phDependence>
        <text evidence="3 4">Optimum pH is 6.0-6.5.</text>
    </phDependence>
</comment>
<comment type="pathway">
    <text evidence="1 2">Cell wall biogenesis; peptidoglycan biosynthesis.</text>
</comment>
<comment type="subunit">
    <text evidence="2">Interacts with FtsI, FtsW and FtsN.</text>
</comment>
<comment type="interaction">
    <interactant intactId="EBI-558469">
        <id>P46022</id>
    </interactant>
    <interactant intactId="EBI-548564">
        <id>P0AD68</id>
        <label>ftsI</label>
    </interactant>
    <organismsDiffer>false</organismsDiffer>
    <experiments>3</experiments>
</comment>
<comment type="subcellular location">
    <subcellularLocation>
        <location evidence="1 4">Cell inner membrane</location>
        <topology evidence="1">Single-pass membrane protein</topology>
    </subcellularLocation>
    <text evidence="2">Localizes to the cell division site.</text>
</comment>
<comment type="similarity">
    <text evidence="1 8">Belongs to the glycosyltransferase 51 family.</text>
</comment>
<comment type="sequence caution" evidence="8">
    <conflict type="frameshift">
        <sequence resource="EMBL" id="D13188"/>
    </conflict>
</comment>
<evidence type="ECO:0000255" key="1">
    <source>
        <dbReference type="HAMAP-Rule" id="MF_00766"/>
    </source>
</evidence>
<evidence type="ECO:0000269" key="2">
    <source>
    </source>
</evidence>
<evidence type="ECO:0000269" key="3">
    <source>
    </source>
</evidence>
<evidence type="ECO:0000269" key="4">
    <source>
    </source>
</evidence>
<evidence type="ECO:0000303" key="5">
    <source>
    </source>
</evidence>
<evidence type="ECO:0000303" key="6">
    <source>
    </source>
</evidence>
<evidence type="ECO:0000303" key="7">
    <source>
    </source>
</evidence>
<evidence type="ECO:0000305" key="8"/>
<reference key="1">
    <citation type="journal article" date="1997" name="Science">
        <title>The complete genome sequence of Escherichia coli K-12.</title>
        <authorList>
            <person name="Blattner F.R."/>
            <person name="Plunkett G. III"/>
            <person name="Bloch C.A."/>
            <person name="Perna N.T."/>
            <person name="Burland V."/>
            <person name="Riley M."/>
            <person name="Collado-Vides J."/>
            <person name="Glasner J.D."/>
            <person name="Rode C.K."/>
            <person name="Mayhew G.F."/>
            <person name="Gregor J."/>
            <person name="Davis N.W."/>
            <person name="Kirkpatrick H.A."/>
            <person name="Goeden M.A."/>
            <person name="Rose D.J."/>
            <person name="Mau B."/>
            <person name="Shao Y."/>
        </authorList>
    </citation>
    <scope>NUCLEOTIDE SEQUENCE [LARGE SCALE GENOMIC DNA]</scope>
    <source>
        <strain>K12 / MG1655 / ATCC 47076</strain>
    </source>
</reference>
<reference key="2">
    <citation type="journal article" date="2006" name="Mol. Syst. Biol.">
        <title>Highly accurate genome sequences of Escherichia coli K-12 strains MG1655 and W3110.</title>
        <authorList>
            <person name="Hayashi K."/>
            <person name="Morooka N."/>
            <person name="Yamamoto Y."/>
            <person name="Fujita K."/>
            <person name="Isono K."/>
            <person name="Choi S."/>
            <person name="Ohtsubo E."/>
            <person name="Baba T."/>
            <person name="Wanner B.L."/>
            <person name="Mori H."/>
            <person name="Horiuchi T."/>
        </authorList>
    </citation>
    <scope>NUCLEOTIDE SEQUENCE [LARGE SCALE GENOMIC DNA]</scope>
    <source>
        <strain>K12 / W3110 / ATCC 27325 / DSM 5911</strain>
    </source>
</reference>
<reference key="3">
    <citation type="submission" date="1993-12" db="EMBL/GenBank/DDBJ databases">
        <title>Sequence and characterisation of the gene encoding the sigma cross-reacting protein 27A in Escherichia coli.</title>
        <authorList>
            <person name="Smillie D.A."/>
            <person name="Fujita N."/>
            <person name="Townsley F.M."/>
            <person name="Ishihama A."/>
            <person name="Hayward R.S."/>
        </authorList>
    </citation>
    <scope>NUCLEOTIDE SEQUENCE [GENOMIC DNA] OF 1-39</scope>
    <source>
        <strain>K12 / W3110 / ATCC 27325 / DSM 5911</strain>
    </source>
</reference>
<reference key="4">
    <citation type="journal article" date="1984" name="FEBS Lett.">
        <title>A novel glycan polymerase that synthesizes uncross-linked peptidoglycan in Escherichia coli.</title>
        <authorList>
            <person name="Hara H."/>
            <person name="Suzuki H."/>
        </authorList>
    </citation>
    <scope>FUNCTION</scope>
    <scope>ACTIVITY REGULATION</scope>
    <scope>BIOPHYSICOCHEMICAL PROPERTIES</scope>
</reference>
<reference key="5">
    <citation type="journal article" date="1996" name="FEBS Lett.">
        <title>The monofunctional glycosyltransferase of Escherichia coli is a member of a new class of peptidoglycan-synthesising enzymes.</title>
        <authorList>
            <person name="Di Berardino M."/>
            <person name="Dijkstra A."/>
            <person name="Stueber D."/>
            <person name="Keck W."/>
            <person name="Gubler M."/>
        </authorList>
    </citation>
    <scope>FUNCTION</scope>
    <scope>CATALYTIC ACTIVITY</scope>
    <scope>ACTIVITY REGULATION</scope>
    <scope>BIOPHYSICOCHEMICAL PROPERTIES</scope>
    <scope>SUBCELLULAR LOCATION</scope>
</reference>
<reference key="6">
    <citation type="journal article" date="2008" name="J. Bacteriol.">
        <title>The monofunctional glycosyltransferase of Escherichia coli localizes to the cell division site and interacts with penicillin-binding protein 3, FtsW, and FtsN.</title>
        <authorList>
            <person name="Derouaux A."/>
            <person name="Wolf B."/>
            <person name="Fraipont C."/>
            <person name="Breukink E."/>
            <person name="Nguyen-Disteche M."/>
            <person name="Terrak M."/>
        </authorList>
    </citation>
    <scope>FUNCTION</scope>
    <scope>CATALYTIC ACTIVITY</scope>
    <scope>PATHWAY</scope>
    <scope>INTERACTION WITH FTSI; FTSW AND FTSN</scope>
    <scope>SUBCELLULAR LOCATION</scope>
</reference>